<comment type="function">
    <text evidence="1">DNA-dependent ATPase involved in processing of recombination intermediates, plays a role in repairing DNA breaks. Stimulates the branch migration of RecA-mediated strand transfer reactions, allowing the 3' invading strand to extend heteroduplex DNA faster. Binds ssDNA in the presence of ADP but not other nucleotides, has ATPase activity that is stimulated by ssDNA and various branched DNA structures, but inhibited by SSB. Does not have RecA's homology-searching function.</text>
</comment>
<comment type="function">
    <text evidence="3 6">Plays a role in DNA repair (PubMed:11810266, PubMed:9141693). Might stabilize or process Holliday junction intermediates (PubMed:15317759). May work with DisA following methyl methanesulfonate (MMS) but not H(2)O(2) damage; DisA is a DNA integrity scanning protein with c-di-AMP synthase activity.</text>
</comment>
<comment type="subunit">
    <text evidence="4">Interacts with DisA (PubMed:23760274).</text>
</comment>
<comment type="domain">
    <text evidence="1">Has a putative N-terminal zinc-finger, a middle region with homology to RecA with ATPase motifs including the RadA KNRFG motif, while the C-terminus is homologous to Lon protease.</text>
</comment>
<comment type="disruption phenotype">
    <text evidence="2 3 5 6">General sensitivity to DNA damaging agents. Increased sensitivity to methyl methanesulfonate (MMS), decreased survival after UV irradiation in transition and stationary phase, decrease in transformation with chromosomal DNA requiring homologous recombination (PubMed:11810266, PubMed:9141693). Increased sensitivity to mitomycin C, H(2)O(2), and nalidixic acid; a further disA deletion suppresses H(2)O(2) sensitivity but has no effect on MMS sensitivity, suggesting radA and disA might work in the same DNA repair pathway (PubMed:25616256). Partially suppresses DNA damaging agent sensitivity of recU deletions (PubMed:11810266). Suppresses a chromosome segregation defect in ruvA and recD mutants cells, but not in recU mutant cells (PubMed:15317759).</text>
</comment>
<comment type="similarity">
    <text evidence="1">Belongs to the RecA family. RadA subfamily.</text>
</comment>
<evidence type="ECO:0000255" key="1">
    <source>
        <dbReference type="HAMAP-Rule" id="MF_01498"/>
    </source>
</evidence>
<evidence type="ECO:0000269" key="2">
    <source>
    </source>
</evidence>
<evidence type="ECO:0000269" key="3">
    <source>
    </source>
</evidence>
<evidence type="ECO:0000269" key="4">
    <source>
    </source>
</evidence>
<evidence type="ECO:0000269" key="5">
    <source>
    </source>
</evidence>
<evidence type="ECO:0000269" key="6">
    <source>
    </source>
</evidence>
<evidence type="ECO:0000303" key="7">
    <source>
    </source>
</evidence>
<protein>
    <recommendedName>
        <fullName evidence="1">DNA repair protein RadA</fullName>
        <ecNumber evidence="1">3.6.4.-</ecNumber>
    </recommendedName>
    <alternativeName>
        <fullName evidence="1">Branch migration protein RadA</fullName>
    </alternativeName>
    <alternativeName>
        <fullName evidence="7">DNA repair protein Sms</fullName>
    </alternativeName>
</protein>
<gene>
    <name evidence="1" type="primary">radA</name>
    <name evidence="7" type="synonym">orf5</name>
    <name evidence="7" type="synonym">sms</name>
    <name type="synonym">yacJ</name>
    <name type="ordered locus">BSU00870</name>
</gene>
<name>RADA_BACSU</name>
<organism>
    <name type="scientific">Bacillus subtilis (strain 168)</name>
    <dbReference type="NCBI Taxonomy" id="224308"/>
    <lineage>
        <taxon>Bacteria</taxon>
        <taxon>Bacillati</taxon>
        <taxon>Bacillota</taxon>
        <taxon>Bacilli</taxon>
        <taxon>Bacillales</taxon>
        <taxon>Bacillaceae</taxon>
        <taxon>Bacillus</taxon>
    </lineage>
</organism>
<feature type="chain" id="PRO_0000187921" description="DNA repair protein RadA">
    <location>
        <begin position="1"/>
        <end position="458"/>
    </location>
</feature>
<feature type="zinc finger region" description="C4-type" evidence="1">
    <location>
        <begin position="10"/>
        <end position="27"/>
    </location>
</feature>
<feature type="region of interest" description="Lon-protease-like" evidence="1">
    <location>
        <begin position="354"/>
        <end position="458"/>
    </location>
</feature>
<feature type="short sequence motif" description="RadA KNRFG motif" evidence="1">
    <location>
        <begin position="255"/>
        <end position="259"/>
    </location>
</feature>
<feature type="binding site" evidence="1">
    <location>
        <begin position="98"/>
        <end position="105"/>
    </location>
    <ligand>
        <name>ATP</name>
        <dbReference type="ChEBI" id="CHEBI:30616"/>
    </ligand>
</feature>
<reference key="1">
    <citation type="journal article" date="1994" name="DNA Res.">
        <title>Systematic sequencing of the 180 kilobase region of the Bacillus subtilis chromosome containing the replication origin.</title>
        <authorList>
            <person name="Ogasawara N."/>
            <person name="Nakai S."/>
            <person name="Yoshikawa H."/>
        </authorList>
    </citation>
    <scope>NUCLEOTIDE SEQUENCE [GENOMIC DNA]</scope>
    <source>
        <strain>168</strain>
    </source>
</reference>
<reference key="2">
    <citation type="journal article" date="1997" name="Nature">
        <title>The complete genome sequence of the Gram-positive bacterium Bacillus subtilis.</title>
        <authorList>
            <person name="Kunst F."/>
            <person name="Ogasawara N."/>
            <person name="Moszer I."/>
            <person name="Albertini A.M."/>
            <person name="Alloni G."/>
            <person name="Azevedo V."/>
            <person name="Bertero M.G."/>
            <person name="Bessieres P."/>
            <person name="Bolotin A."/>
            <person name="Borchert S."/>
            <person name="Borriss R."/>
            <person name="Boursier L."/>
            <person name="Brans A."/>
            <person name="Braun M."/>
            <person name="Brignell S.C."/>
            <person name="Bron S."/>
            <person name="Brouillet S."/>
            <person name="Bruschi C.V."/>
            <person name="Caldwell B."/>
            <person name="Capuano V."/>
            <person name="Carter N.M."/>
            <person name="Choi S.-K."/>
            <person name="Codani J.-J."/>
            <person name="Connerton I.F."/>
            <person name="Cummings N.J."/>
            <person name="Daniel R.A."/>
            <person name="Denizot F."/>
            <person name="Devine K.M."/>
            <person name="Duesterhoeft A."/>
            <person name="Ehrlich S.D."/>
            <person name="Emmerson P.T."/>
            <person name="Entian K.-D."/>
            <person name="Errington J."/>
            <person name="Fabret C."/>
            <person name="Ferrari E."/>
            <person name="Foulger D."/>
            <person name="Fritz C."/>
            <person name="Fujita M."/>
            <person name="Fujita Y."/>
            <person name="Fuma S."/>
            <person name="Galizzi A."/>
            <person name="Galleron N."/>
            <person name="Ghim S.-Y."/>
            <person name="Glaser P."/>
            <person name="Goffeau A."/>
            <person name="Golightly E.J."/>
            <person name="Grandi G."/>
            <person name="Guiseppi G."/>
            <person name="Guy B.J."/>
            <person name="Haga K."/>
            <person name="Haiech J."/>
            <person name="Harwood C.R."/>
            <person name="Henaut A."/>
            <person name="Hilbert H."/>
            <person name="Holsappel S."/>
            <person name="Hosono S."/>
            <person name="Hullo M.-F."/>
            <person name="Itaya M."/>
            <person name="Jones L.-M."/>
            <person name="Joris B."/>
            <person name="Karamata D."/>
            <person name="Kasahara Y."/>
            <person name="Klaerr-Blanchard M."/>
            <person name="Klein C."/>
            <person name="Kobayashi Y."/>
            <person name="Koetter P."/>
            <person name="Koningstein G."/>
            <person name="Krogh S."/>
            <person name="Kumano M."/>
            <person name="Kurita K."/>
            <person name="Lapidus A."/>
            <person name="Lardinois S."/>
            <person name="Lauber J."/>
            <person name="Lazarevic V."/>
            <person name="Lee S.-M."/>
            <person name="Levine A."/>
            <person name="Liu H."/>
            <person name="Masuda S."/>
            <person name="Mauel C."/>
            <person name="Medigue C."/>
            <person name="Medina N."/>
            <person name="Mellado R.P."/>
            <person name="Mizuno M."/>
            <person name="Moestl D."/>
            <person name="Nakai S."/>
            <person name="Noback M."/>
            <person name="Noone D."/>
            <person name="O'Reilly M."/>
            <person name="Ogawa K."/>
            <person name="Ogiwara A."/>
            <person name="Oudega B."/>
            <person name="Park S.-H."/>
            <person name="Parro V."/>
            <person name="Pohl T.M."/>
            <person name="Portetelle D."/>
            <person name="Porwollik S."/>
            <person name="Prescott A.M."/>
            <person name="Presecan E."/>
            <person name="Pujic P."/>
            <person name="Purnelle B."/>
            <person name="Rapoport G."/>
            <person name="Rey M."/>
            <person name="Reynolds S."/>
            <person name="Rieger M."/>
            <person name="Rivolta C."/>
            <person name="Rocha E."/>
            <person name="Roche B."/>
            <person name="Rose M."/>
            <person name="Sadaie Y."/>
            <person name="Sato T."/>
            <person name="Scanlan E."/>
            <person name="Schleich S."/>
            <person name="Schroeter R."/>
            <person name="Scoffone F."/>
            <person name="Sekiguchi J."/>
            <person name="Sekowska A."/>
            <person name="Seror S.J."/>
            <person name="Serror P."/>
            <person name="Shin B.-S."/>
            <person name="Soldo B."/>
            <person name="Sorokin A."/>
            <person name="Tacconi E."/>
            <person name="Takagi T."/>
            <person name="Takahashi H."/>
            <person name="Takemaru K."/>
            <person name="Takeuchi M."/>
            <person name="Tamakoshi A."/>
            <person name="Tanaka T."/>
            <person name="Terpstra P."/>
            <person name="Tognoni A."/>
            <person name="Tosato V."/>
            <person name="Uchiyama S."/>
            <person name="Vandenbol M."/>
            <person name="Vannier F."/>
            <person name="Vassarotti A."/>
            <person name="Viari A."/>
            <person name="Wambutt R."/>
            <person name="Wedler E."/>
            <person name="Wedler H."/>
            <person name="Weitzenegger T."/>
            <person name="Winters P."/>
            <person name="Wipat A."/>
            <person name="Yamamoto H."/>
            <person name="Yamane K."/>
            <person name="Yasumoto K."/>
            <person name="Yata K."/>
            <person name="Yoshida K."/>
            <person name="Yoshikawa H.-F."/>
            <person name="Zumstein E."/>
            <person name="Yoshikawa H."/>
            <person name="Danchin A."/>
        </authorList>
    </citation>
    <scope>NUCLEOTIDE SEQUENCE [LARGE SCALE GENOMIC DNA]</scope>
    <source>
        <strain>168</strain>
    </source>
</reference>
<reference key="3">
    <citation type="journal article" date="1994" name="Proc. Natl. Acad. Sci. U.S.A.">
        <title>MecB of Bacillus subtilis, a member of the ClpC ATPase family, is a pleiotropic regulator controlling competence gene expression and growth at high temperature.</title>
        <authorList>
            <person name="Msadek T."/>
            <person name="Kunst F."/>
            <person name="Rapoport G."/>
        </authorList>
    </citation>
    <scope>NUCLEOTIDE SEQUENCE [GENOMIC DNA] OF 1-259</scope>
    <source>
        <strain>168 / Marburg / ATCC 6051 / DSM 10 / JCM 1465 / NBRC 13719 / NCIMB 3610 / NRRL NRS-744 / VKM B-501</strain>
    </source>
</reference>
<reference key="4">
    <citation type="journal article" date="1997" name="Microbiology">
        <title>The Bacillus subtilis clpC operon encodes DNA repair and competence proteins.</title>
        <authorList>
            <person name="Krueger E."/>
            <person name="Msadek T."/>
            <person name="Ohlmeier S."/>
            <person name="Hecker M."/>
        </authorList>
    </citation>
    <scope>FUNCTION</scope>
    <scope>DISRUPTION PHENOTYPE</scope>
    <source>
        <strain>168 / IS58</strain>
    </source>
</reference>
<reference key="5">
    <citation type="journal article" date="2002" name="Mol. Genet. Genomics">
        <title>Effect of the recU suppressors sms and subA on DNA repair and homologous recombination in Bacillus subtilis.</title>
        <authorList>
            <person name="Carrasco B."/>
            <person name="Fernandez S."/>
            <person name="Asai K."/>
            <person name="Ogasawara N."/>
            <person name="Alonso J.C."/>
        </authorList>
    </citation>
    <scope>FUNCTION</scope>
    <scope>DISRUPTION PHENOTYPE</scope>
    <source>
        <strain>168 / YB886 / BG214</strain>
    </source>
</reference>
<reference key="6">
    <citation type="journal article" date="2004" name="J. Bacteriol.">
        <title>Genetic recombination in Bacillus subtilis 168: contribution of Holliday junction processing functions in chromosome segregation.</title>
        <authorList>
            <person name="Carrasco B."/>
            <person name="Cozar M.C."/>
            <person name="Lurz R."/>
            <person name="Alonso J.C."/>
            <person name="Ayora S."/>
        </authorList>
    </citation>
    <scope>FUNCTION</scope>
    <scope>DISRUPTION PHENOTYPE</scope>
    <source>
        <strain>168 / YB886 / BG214</strain>
    </source>
</reference>
<reference key="7">
    <citation type="journal article" date="2013" name="J. Biol. Chem.">
        <title>Radiation-sensitive gene A (RadA) targets DisA, DNA integrity scanning protein A, to negatively affect cyclic di-AMP synthesis activity in Mycobacterium smegmatis.</title>
        <authorList>
            <person name="Zhang L."/>
            <person name="He Z.G."/>
        </authorList>
    </citation>
    <scope>INTERACTION WITH DISA</scope>
</reference>
<reference key="8">
    <citation type="journal article" date="2015" name="DNA Repair">
        <title>DisA and c-di-AMP act at the intersection between DNA-damage response and stress homeostasis in exponentially growing Bacillus subtilis cells.</title>
        <authorList>
            <person name="Gandara C."/>
            <person name="Alonso J.C."/>
        </authorList>
    </citation>
    <scope>FUNCTION</scope>
    <scope>DISRUPTION PHENOTYPE</scope>
    <source>
        <strain>168</strain>
        <strain>168 / PY79</strain>
        <strain>168 / YB886 / BG214</strain>
    </source>
</reference>
<sequence>MAKTKSKFICQSCGYESPKWMGKCPGCGAWNTMVEEMIKKAPANRRAAFSHSVQTVQKPSPITSIETSEEPRVKTQLGEFNRVLGGGVVKGSLVLIGGDPGIGKSTLLLQVSAQLSGSSNSVLYISGEESVKQTKLRADRLGINNPSLHVLSETDMEYISSAIQEMNPSFVVVDSIQTVYQSDITSAPGSVSQVRECTAELMKIAKTKGIPIFIVGHVTKEGSIAGPRLLEHMVDTVLYFEGERHHTFRILRAVKNRFGSTNEMGIFEMREEGLTEVLNPSEIFLEERSAGSAGSSITASMEGTRPILVEIQALISPTSFGNPRRMATGIDHNRVSLLMAVLEKRVGLLLQNQDAYLKVAGGVKLDEPAIDLAIVISIASSFRDTPPNPADCFIGEVGLTGEVRRVSRIEQRVKEAAKLGFKRMIIPAANLDGWTKPKGIEVIGVANVAEALRTSLGG</sequence>
<keyword id="KW-0067">ATP-binding</keyword>
<keyword id="KW-0227">DNA damage</keyword>
<keyword id="KW-0234">DNA repair</keyword>
<keyword id="KW-0238">DNA-binding</keyword>
<keyword id="KW-0378">Hydrolase</keyword>
<keyword id="KW-0479">Metal-binding</keyword>
<keyword id="KW-0547">Nucleotide-binding</keyword>
<keyword id="KW-1185">Reference proteome</keyword>
<keyword id="KW-0346">Stress response</keyword>
<keyword id="KW-0862">Zinc</keyword>
<keyword id="KW-0863">Zinc-finger</keyword>
<dbReference type="EC" id="3.6.4.-" evidence="1"/>
<dbReference type="EMBL" id="D26185">
    <property type="protein sequence ID" value="BAA05321.1"/>
    <property type="molecule type" value="Genomic_DNA"/>
</dbReference>
<dbReference type="EMBL" id="AL009126">
    <property type="protein sequence ID" value="CAB11863.1"/>
    <property type="molecule type" value="Genomic_DNA"/>
</dbReference>
<dbReference type="EMBL" id="U02604">
    <property type="protein sequence ID" value="AAA19234.1"/>
    <property type="molecule type" value="Unassigned_DNA"/>
</dbReference>
<dbReference type="PIR" id="S66116">
    <property type="entry name" value="S66116"/>
</dbReference>
<dbReference type="RefSeq" id="NP_387968.1">
    <property type="nucleotide sequence ID" value="NC_000964.3"/>
</dbReference>
<dbReference type="RefSeq" id="WP_004399687.1">
    <property type="nucleotide sequence ID" value="NZ_OZ025638.1"/>
</dbReference>
<dbReference type="SMR" id="P37572"/>
<dbReference type="FunCoup" id="P37572">
    <property type="interactions" value="424"/>
</dbReference>
<dbReference type="STRING" id="224308.BSU00870"/>
<dbReference type="MEROPS" id="S16.A04"/>
<dbReference type="PaxDb" id="224308-BSU00870"/>
<dbReference type="EnsemblBacteria" id="CAB11863">
    <property type="protein sequence ID" value="CAB11863"/>
    <property type="gene ID" value="BSU_00870"/>
</dbReference>
<dbReference type="GeneID" id="936872"/>
<dbReference type="KEGG" id="bsu:BSU00870"/>
<dbReference type="PATRIC" id="fig|224308.179.peg.88"/>
<dbReference type="eggNOG" id="COG1066">
    <property type="taxonomic scope" value="Bacteria"/>
</dbReference>
<dbReference type="InParanoid" id="P37572"/>
<dbReference type="OrthoDB" id="9803906at2"/>
<dbReference type="PhylomeDB" id="P37572"/>
<dbReference type="BioCyc" id="BSUB:BSU00870-MONOMER"/>
<dbReference type="BRENDA" id="3.6.4.B7">
    <property type="organism ID" value="658"/>
</dbReference>
<dbReference type="Proteomes" id="UP000001570">
    <property type="component" value="Chromosome"/>
</dbReference>
<dbReference type="GO" id="GO:0005524">
    <property type="term" value="F:ATP binding"/>
    <property type="evidence" value="ECO:0007669"/>
    <property type="project" value="UniProtKB-UniRule"/>
</dbReference>
<dbReference type="GO" id="GO:0016887">
    <property type="term" value="F:ATP hydrolysis activity"/>
    <property type="evidence" value="ECO:0007669"/>
    <property type="project" value="InterPro"/>
</dbReference>
<dbReference type="GO" id="GO:0140664">
    <property type="term" value="F:ATP-dependent DNA damage sensor activity"/>
    <property type="evidence" value="ECO:0007669"/>
    <property type="project" value="InterPro"/>
</dbReference>
<dbReference type="GO" id="GO:0003684">
    <property type="term" value="F:damaged DNA binding"/>
    <property type="evidence" value="ECO:0007669"/>
    <property type="project" value="InterPro"/>
</dbReference>
<dbReference type="GO" id="GO:0008270">
    <property type="term" value="F:zinc ion binding"/>
    <property type="evidence" value="ECO:0007669"/>
    <property type="project" value="UniProtKB-KW"/>
</dbReference>
<dbReference type="GO" id="GO:0000725">
    <property type="term" value="P:recombinational repair"/>
    <property type="evidence" value="ECO:0000318"/>
    <property type="project" value="GO_Central"/>
</dbReference>
<dbReference type="CDD" id="cd01121">
    <property type="entry name" value="RadA_SMS_N"/>
    <property type="match status" value="1"/>
</dbReference>
<dbReference type="FunFam" id="3.30.230.10:FF:000031">
    <property type="entry name" value="DNA repair protein RadA"/>
    <property type="match status" value="1"/>
</dbReference>
<dbReference type="FunFam" id="3.40.50.300:FF:000050">
    <property type="entry name" value="DNA repair protein RadA"/>
    <property type="match status" value="1"/>
</dbReference>
<dbReference type="Gene3D" id="3.30.230.10">
    <property type="match status" value="1"/>
</dbReference>
<dbReference type="Gene3D" id="3.40.50.300">
    <property type="entry name" value="P-loop containing nucleotide triphosphate hydrolases"/>
    <property type="match status" value="1"/>
</dbReference>
<dbReference type="HAMAP" id="MF_01498">
    <property type="entry name" value="RadA_bact"/>
    <property type="match status" value="1"/>
</dbReference>
<dbReference type="InterPro" id="IPR003593">
    <property type="entry name" value="AAA+_ATPase"/>
</dbReference>
<dbReference type="InterPro" id="IPR004504">
    <property type="entry name" value="DNA_repair_RadA"/>
</dbReference>
<dbReference type="InterPro" id="IPR027417">
    <property type="entry name" value="P-loop_NTPase"/>
</dbReference>
<dbReference type="InterPro" id="IPR020588">
    <property type="entry name" value="RecA_ATP-bd"/>
</dbReference>
<dbReference type="InterPro" id="IPR020568">
    <property type="entry name" value="Ribosomal_Su5_D2-typ_SF"/>
</dbReference>
<dbReference type="InterPro" id="IPR014721">
    <property type="entry name" value="Ribsml_uS5_D2-typ_fold_subgr"/>
</dbReference>
<dbReference type="InterPro" id="IPR041166">
    <property type="entry name" value="Rubredoxin_2"/>
</dbReference>
<dbReference type="NCBIfam" id="TIGR00416">
    <property type="entry name" value="sms"/>
    <property type="match status" value="1"/>
</dbReference>
<dbReference type="PANTHER" id="PTHR32472">
    <property type="entry name" value="DNA REPAIR PROTEIN RADA"/>
    <property type="match status" value="1"/>
</dbReference>
<dbReference type="PANTHER" id="PTHR32472:SF10">
    <property type="entry name" value="DNA REPAIR PROTEIN RADA-LIKE PROTEIN"/>
    <property type="match status" value="1"/>
</dbReference>
<dbReference type="Pfam" id="PF13481">
    <property type="entry name" value="AAA_25"/>
    <property type="match status" value="1"/>
</dbReference>
<dbReference type="Pfam" id="PF13541">
    <property type="entry name" value="ChlI"/>
    <property type="match status" value="1"/>
</dbReference>
<dbReference type="Pfam" id="PF18073">
    <property type="entry name" value="Zn_ribbon_LapB"/>
    <property type="match status" value="1"/>
</dbReference>
<dbReference type="PRINTS" id="PR01874">
    <property type="entry name" value="DNAREPAIRADA"/>
</dbReference>
<dbReference type="SMART" id="SM00382">
    <property type="entry name" value="AAA"/>
    <property type="match status" value="1"/>
</dbReference>
<dbReference type="SUPFAM" id="SSF52540">
    <property type="entry name" value="P-loop containing nucleoside triphosphate hydrolases"/>
    <property type="match status" value="1"/>
</dbReference>
<dbReference type="SUPFAM" id="SSF54211">
    <property type="entry name" value="Ribosomal protein S5 domain 2-like"/>
    <property type="match status" value="1"/>
</dbReference>
<dbReference type="PROSITE" id="PS50162">
    <property type="entry name" value="RECA_2"/>
    <property type="match status" value="1"/>
</dbReference>
<accession>P37572</accession>
<proteinExistence type="evidence at protein level"/>